<organism>
    <name type="scientific">Rhodopseudomonas palustris (strain TIE-1)</name>
    <dbReference type="NCBI Taxonomy" id="395960"/>
    <lineage>
        <taxon>Bacteria</taxon>
        <taxon>Pseudomonadati</taxon>
        <taxon>Pseudomonadota</taxon>
        <taxon>Alphaproteobacteria</taxon>
        <taxon>Hyphomicrobiales</taxon>
        <taxon>Nitrobacteraceae</taxon>
        <taxon>Rhodopseudomonas</taxon>
    </lineage>
</organism>
<evidence type="ECO:0000255" key="1">
    <source>
        <dbReference type="HAMAP-Rule" id="MF_00294"/>
    </source>
</evidence>
<evidence type="ECO:0000305" key="2"/>
<dbReference type="EMBL" id="CP001096">
    <property type="protein sequence ID" value="ACF02040.1"/>
    <property type="molecule type" value="Genomic_DNA"/>
</dbReference>
<dbReference type="RefSeq" id="WP_011158674.1">
    <property type="nucleotide sequence ID" value="NC_011004.1"/>
</dbReference>
<dbReference type="SMR" id="B3Q9Y7"/>
<dbReference type="GeneID" id="66894211"/>
<dbReference type="KEGG" id="rpt:Rpal_3540"/>
<dbReference type="HOGENOM" id="CLU_190949_1_1_5"/>
<dbReference type="OrthoDB" id="21586at2"/>
<dbReference type="Proteomes" id="UP000001725">
    <property type="component" value="Chromosome"/>
</dbReference>
<dbReference type="GO" id="GO:0022625">
    <property type="term" value="C:cytosolic large ribosomal subunit"/>
    <property type="evidence" value="ECO:0007669"/>
    <property type="project" value="TreeGrafter"/>
</dbReference>
<dbReference type="GO" id="GO:0003735">
    <property type="term" value="F:structural constituent of ribosome"/>
    <property type="evidence" value="ECO:0007669"/>
    <property type="project" value="InterPro"/>
</dbReference>
<dbReference type="GO" id="GO:0006412">
    <property type="term" value="P:translation"/>
    <property type="evidence" value="ECO:0007669"/>
    <property type="project" value="UniProtKB-UniRule"/>
</dbReference>
<dbReference type="FunFam" id="2.20.28.120:FF:000003">
    <property type="entry name" value="50S ribosomal protein L33"/>
    <property type="match status" value="1"/>
</dbReference>
<dbReference type="Gene3D" id="2.20.28.120">
    <property type="entry name" value="Ribosomal protein L33"/>
    <property type="match status" value="1"/>
</dbReference>
<dbReference type="HAMAP" id="MF_00294">
    <property type="entry name" value="Ribosomal_bL33"/>
    <property type="match status" value="1"/>
</dbReference>
<dbReference type="InterPro" id="IPR001705">
    <property type="entry name" value="Ribosomal_bL33"/>
</dbReference>
<dbReference type="InterPro" id="IPR018264">
    <property type="entry name" value="Ribosomal_bL33_CS"/>
</dbReference>
<dbReference type="InterPro" id="IPR038584">
    <property type="entry name" value="Ribosomal_bL33_sf"/>
</dbReference>
<dbReference type="InterPro" id="IPR011332">
    <property type="entry name" value="Ribosomal_zn-bd"/>
</dbReference>
<dbReference type="NCBIfam" id="NF001860">
    <property type="entry name" value="PRK00595.1"/>
    <property type="match status" value="1"/>
</dbReference>
<dbReference type="NCBIfam" id="TIGR01023">
    <property type="entry name" value="rpmG_bact"/>
    <property type="match status" value="1"/>
</dbReference>
<dbReference type="PANTHER" id="PTHR15238">
    <property type="entry name" value="54S RIBOSOMAL PROTEIN L39, MITOCHONDRIAL"/>
    <property type="match status" value="1"/>
</dbReference>
<dbReference type="PANTHER" id="PTHR15238:SF1">
    <property type="entry name" value="LARGE RIBOSOMAL SUBUNIT PROTEIN BL33M"/>
    <property type="match status" value="1"/>
</dbReference>
<dbReference type="Pfam" id="PF00471">
    <property type="entry name" value="Ribosomal_L33"/>
    <property type="match status" value="1"/>
</dbReference>
<dbReference type="SUPFAM" id="SSF57829">
    <property type="entry name" value="Zn-binding ribosomal proteins"/>
    <property type="match status" value="1"/>
</dbReference>
<dbReference type="PROSITE" id="PS00582">
    <property type="entry name" value="RIBOSOMAL_L33"/>
    <property type="match status" value="1"/>
</dbReference>
<protein>
    <recommendedName>
        <fullName evidence="1">Large ribosomal subunit protein bL33</fullName>
    </recommendedName>
    <alternativeName>
        <fullName evidence="2">50S ribosomal protein L33</fullName>
    </alternativeName>
</protein>
<accession>B3Q9Y7</accession>
<feature type="chain" id="PRO_0000356635" description="Large ribosomal subunit protein bL33">
    <location>
        <begin position="1"/>
        <end position="55"/>
    </location>
</feature>
<name>RL33_RHOPT</name>
<reference key="1">
    <citation type="submission" date="2008-05" db="EMBL/GenBank/DDBJ databases">
        <title>Complete sequence of Rhodopseudomonas palustris TIE-1.</title>
        <authorList>
            <consortium name="US DOE Joint Genome Institute"/>
            <person name="Lucas S."/>
            <person name="Copeland A."/>
            <person name="Lapidus A."/>
            <person name="Glavina del Rio T."/>
            <person name="Dalin E."/>
            <person name="Tice H."/>
            <person name="Pitluck S."/>
            <person name="Chain P."/>
            <person name="Malfatti S."/>
            <person name="Shin M."/>
            <person name="Vergez L."/>
            <person name="Lang D."/>
            <person name="Schmutz J."/>
            <person name="Larimer F."/>
            <person name="Land M."/>
            <person name="Hauser L."/>
            <person name="Kyrpides N."/>
            <person name="Mikhailova N."/>
            <person name="Emerson D."/>
            <person name="Newman D.K."/>
            <person name="Roden E."/>
            <person name="Richardson P."/>
        </authorList>
    </citation>
    <scope>NUCLEOTIDE SEQUENCE [LARGE SCALE GENOMIC DNA]</scope>
    <source>
        <strain>TIE-1</strain>
    </source>
</reference>
<gene>
    <name evidence="1" type="primary">rpmG</name>
    <name type="ordered locus">Rpal_3540</name>
</gene>
<sequence length="55" mass="6367">MAKAVTIKIKLVSTADTGFYYVTKKNSRTMTDKMVKKKYDPVARKHVEFKEAKIK</sequence>
<keyword id="KW-0687">Ribonucleoprotein</keyword>
<keyword id="KW-0689">Ribosomal protein</keyword>
<proteinExistence type="inferred from homology"/>
<comment type="similarity">
    <text evidence="1">Belongs to the bacterial ribosomal protein bL33 family.</text>
</comment>